<gene>
    <name type="ordered locus">Gbem_0242</name>
</gene>
<comment type="function">
    <text evidence="1">Bifunctional serine/threonine kinase and phosphorylase involved in the regulation of the pyruvate, phosphate dikinase (PPDK) by catalyzing its phosphorylation/dephosphorylation.</text>
</comment>
<comment type="catalytic activity">
    <reaction evidence="1">
        <text>N(tele)-phospho-L-histidyl/L-threonyl-[pyruvate, phosphate dikinase] + ADP = N(tele)-phospho-L-histidyl/O-phospho-L-threonyl-[pyruvate, phosphate dikinase] + AMP + H(+)</text>
        <dbReference type="Rhea" id="RHEA:43692"/>
        <dbReference type="Rhea" id="RHEA-COMP:10650"/>
        <dbReference type="Rhea" id="RHEA-COMP:10651"/>
        <dbReference type="ChEBI" id="CHEBI:15378"/>
        <dbReference type="ChEBI" id="CHEBI:30013"/>
        <dbReference type="ChEBI" id="CHEBI:61977"/>
        <dbReference type="ChEBI" id="CHEBI:83586"/>
        <dbReference type="ChEBI" id="CHEBI:456215"/>
        <dbReference type="ChEBI" id="CHEBI:456216"/>
        <dbReference type="EC" id="2.7.11.32"/>
    </reaction>
</comment>
<comment type="catalytic activity">
    <reaction evidence="1">
        <text>N(tele)-phospho-L-histidyl/O-phospho-L-threonyl-[pyruvate, phosphate dikinase] + phosphate + H(+) = N(tele)-phospho-L-histidyl/L-threonyl-[pyruvate, phosphate dikinase] + diphosphate</text>
        <dbReference type="Rhea" id="RHEA:43696"/>
        <dbReference type="Rhea" id="RHEA-COMP:10650"/>
        <dbReference type="Rhea" id="RHEA-COMP:10651"/>
        <dbReference type="ChEBI" id="CHEBI:15378"/>
        <dbReference type="ChEBI" id="CHEBI:30013"/>
        <dbReference type="ChEBI" id="CHEBI:33019"/>
        <dbReference type="ChEBI" id="CHEBI:43474"/>
        <dbReference type="ChEBI" id="CHEBI:61977"/>
        <dbReference type="ChEBI" id="CHEBI:83586"/>
        <dbReference type="EC" id="2.7.4.27"/>
    </reaction>
</comment>
<comment type="similarity">
    <text evidence="1">Belongs to the pyruvate, phosphate/water dikinase regulatory protein family. PDRP subfamily.</text>
</comment>
<proteinExistence type="inferred from homology"/>
<keyword id="KW-0418">Kinase</keyword>
<keyword id="KW-0547">Nucleotide-binding</keyword>
<keyword id="KW-1185">Reference proteome</keyword>
<keyword id="KW-0723">Serine/threonine-protein kinase</keyword>
<keyword id="KW-0808">Transferase</keyword>
<evidence type="ECO:0000255" key="1">
    <source>
        <dbReference type="HAMAP-Rule" id="MF_00921"/>
    </source>
</evidence>
<dbReference type="EC" id="2.7.11.32" evidence="1"/>
<dbReference type="EC" id="2.7.4.27" evidence="1"/>
<dbReference type="EMBL" id="CP001124">
    <property type="protein sequence ID" value="ACH37273.1"/>
    <property type="molecule type" value="Genomic_DNA"/>
</dbReference>
<dbReference type="RefSeq" id="WP_012528681.1">
    <property type="nucleotide sequence ID" value="NC_011146.1"/>
</dbReference>
<dbReference type="SMR" id="B5E9X5"/>
<dbReference type="STRING" id="404380.Gbem_0242"/>
<dbReference type="KEGG" id="gbm:Gbem_0242"/>
<dbReference type="eggNOG" id="COG1806">
    <property type="taxonomic scope" value="Bacteria"/>
</dbReference>
<dbReference type="HOGENOM" id="CLU_046206_2_1_7"/>
<dbReference type="OrthoDB" id="9782201at2"/>
<dbReference type="Proteomes" id="UP000008825">
    <property type="component" value="Chromosome"/>
</dbReference>
<dbReference type="GO" id="GO:0043531">
    <property type="term" value="F:ADP binding"/>
    <property type="evidence" value="ECO:0007669"/>
    <property type="project" value="UniProtKB-UniRule"/>
</dbReference>
<dbReference type="GO" id="GO:0005524">
    <property type="term" value="F:ATP binding"/>
    <property type="evidence" value="ECO:0007669"/>
    <property type="project" value="InterPro"/>
</dbReference>
<dbReference type="GO" id="GO:0016776">
    <property type="term" value="F:phosphotransferase activity, phosphate group as acceptor"/>
    <property type="evidence" value="ECO:0007669"/>
    <property type="project" value="UniProtKB-UniRule"/>
</dbReference>
<dbReference type="GO" id="GO:0004674">
    <property type="term" value="F:protein serine/threonine kinase activity"/>
    <property type="evidence" value="ECO:0007669"/>
    <property type="project" value="UniProtKB-UniRule"/>
</dbReference>
<dbReference type="HAMAP" id="MF_00921">
    <property type="entry name" value="PDRP"/>
    <property type="match status" value="1"/>
</dbReference>
<dbReference type="InterPro" id="IPR005177">
    <property type="entry name" value="Kinase-pyrophosphorylase"/>
</dbReference>
<dbReference type="InterPro" id="IPR026565">
    <property type="entry name" value="PPDK_reg"/>
</dbReference>
<dbReference type="NCBIfam" id="NF003742">
    <property type="entry name" value="PRK05339.1"/>
    <property type="match status" value="1"/>
</dbReference>
<dbReference type="PANTHER" id="PTHR31756">
    <property type="entry name" value="PYRUVATE, PHOSPHATE DIKINASE REGULATORY PROTEIN 1, CHLOROPLASTIC"/>
    <property type="match status" value="1"/>
</dbReference>
<dbReference type="PANTHER" id="PTHR31756:SF3">
    <property type="entry name" value="PYRUVATE, PHOSPHATE DIKINASE REGULATORY PROTEIN 1, CHLOROPLASTIC"/>
    <property type="match status" value="1"/>
</dbReference>
<dbReference type="Pfam" id="PF03618">
    <property type="entry name" value="Kinase-PPPase"/>
    <property type="match status" value="1"/>
</dbReference>
<accession>B5E9X5</accession>
<name>PDRP_CITBB</name>
<organism>
    <name type="scientific">Citrifermentans bemidjiense (strain ATCC BAA-1014 / DSM 16622 / JCM 12645 / Bem)</name>
    <name type="common">Geobacter bemidjiensis</name>
    <dbReference type="NCBI Taxonomy" id="404380"/>
    <lineage>
        <taxon>Bacteria</taxon>
        <taxon>Pseudomonadati</taxon>
        <taxon>Thermodesulfobacteriota</taxon>
        <taxon>Desulfuromonadia</taxon>
        <taxon>Geobacterales</taxon>
        <taxon>Geobacteraceae</taxon>
        <taxon>Citrifermentans</taxon>
    </lineage>
</organism>
<reference key="1">
    <citation type="submission" date="2008-07" db="EMBL/GenBank/DDBJ databases">
        <title>Complete sequence of Geobacter bemidjiensis BEM.</title>
        <authorList>
            <consortium name="US DOE Joint Genome Institute"/>
            <person name="Lucas S."/>
            <person name="Copeland A."/>
            <person name="Lapidus A."/>
            <person name="Glavina del Rio T."/>
            <person name="Dalin E."/>
            <person name="Tice H."/>
            <person name="Bruce D."/>
            <person name="Goodwin L."/>
            <person name="Pitluck S."/>
            <person name="Kiss H."/>
            <person name="Brettin T."/>
            <person name="Detter J.C."/>
            <person name="Han C."/>
            <person name="Kuske C.R."/>
            <person name="Schmutz J."/>
            <person name="Larimer F."/>
            <person name="Land M."/>
            <person name="Hauser L."/>
            <person name="Kyrpides N."/>
            <person name="Lykidis A."/>
            <person name="Lovley D."/>
            <person name="Richardson P."/>
        </authorList>
    </citation>
    <scope>NUCLEOTIDE SEQUENCE [LARGE SCALE GENOMIC DNA]</scope>
    <source>
        <strain>ATCC BAA-1014 / DSM 16622 / JCM 12645 / Bem</strain>
    </source>
</reference>
<sequence>MYHVYLLSDATGETVERVARAALTQFRDVDIRLRRMGQIRNREDILRALDEVDRAPGIIFYTLVNTELAQFVRNEVEARQLEAVDLITPLLYKLAEFLEMRPQKLPGLQYEMNSEYYRRMEAVDFTVKQDDGQEPRNLHKADIVLIGVSRSSKTPLSMYLAHKGYKVANVPIIQGIDPPGELEEVEPERVVGLIIDTQRLVDIRSARLRNLRQSPRGSYADYRQVEEELAYCRRFYRAHPAWLVIDVTNKSVEESAAEILSRLHGDIRHD</sequence>
<protein>
    <recommendedName>
        <fullName evidence="1">Putative pyruvate, phosphate dikinase regulatory protein</fullName>
        <shortName evidence="1">PPDK regulatory protein</shortName>
        <ecNumber evidence="1">2.7.11.32</ecNumber>
        <ecNumber evidence="1">2.7.4.27</ecNumber>
    </recommendedName>
</protein>
<feature type="chain" id="PRO_1000136476" description="Putative pyruvate, phosphate dikinase regulatory protein">
    <location>
        <begin position="1"/>
        <end position="270"/>
    </location>
</feature>
<feature type="binding site" evidence="1">
    <location>
        <begin position="147"/>
        <end position="154"/>
    </location>
    <ligand>
        <name>ADP</name>
        <dbReference type="ChEBI" id="CHEBI:456216"/>
    </ligand>
</feature>